<proteinExistence type="evidence at protein level"/>
<sequence>MAERESGLSGGAASPPAASPFLGLHIASPPNFRLTHDISLEEFEDEDLSEITDECGISLQCKDTLSLRPPRAGLLSAGSSGSAGSRLQAEMLQMDLIDAASDTPGAEDDEEDDDELAAQRPGVGPSKAESGQEPASRSQGQGQGPGTGSGDTYRPKRPTTLNLFPQVPRSQDTLNNNSLGKKHSWQDRVSRSSSPLKTGEQTPPHEHICLSDELPPQGSPVPTQDRGTSTDSPCRRTAATQMAPPSGPPATAPGGRGHSHRDRIHYQADVRLEATEEIYLTPVQRPPDPAEPTSTFLPPTESRMSVSSDPDPAAYSVTAGRPHPSISEEDEGFDCLSSPEQAEPPGGGWRGSLGEPPPPPRASLSSDTSALSYDSVKYTLVVDEHAQLELVSLRPCFGDYSDESDSATVYDNCASASSPYESAIGEEYEEAPQPRPPTCLSEDSTPDEPDVHFSKKFLNVFMSGRSRSSSAESFGLFSCVINGEEHEQTHRAIFRFVPRHEDELELEVDDPLLVELQAEDYWYEAYNMRTGARGVFPAYYAIEVTKEPEHMAALAKNSDWIDQFRVKFLGSVQVPYHKGNDVLCAAMQKIATTRRLTVHFNPPSSCVLEISVRGVKIGVKADEAQEAKGNKCSHFFQLKNISFCGYHPKNNKYFGFITKHPADHRFACHVFVSEDSTKALAESVGRAFQQFYKQFVEYTCPTEDIYLE</sequence>
<protein>
    <recommendedName>
        <fullName>C-Jun-amino-terminal kinase-interacting protein 1</fullName>
        <shortName>JIP-1</shortName>
        <shortName>JNK-interacting protein 1</shortName>
    </recommendedName>
    <alternativeName>
        <fullName>Islet-brain-1</fullName>
        <shortName>IB-1</shortName>
    </alternativeName>
    <alternativeName>
        <fullName>JIP-1-related protein</fullName>
        <shortName>JRP</shortName>
    </alternativeName>
    <alternativeName>
        <fullName>JNK MAP kinase scaffold protein 1</fullName>
    </alternativeName>
    <alternativeName>
        <fullName>Mitogen-activated protein kinase 8-interacting protein 1</fullName>
    </alternativeName>
</protein>
<dbReference type="EMBL" id="AF108959">
    <property type="protein sequence ID" value="AAD22543.1"/>
    <property type="status" value="ALT_INIT"/>
    <property type="molecule type" value="mRNA"/>
</dbReference>
<dbReference type="EMBL" id="AF092450">
    <property type="protein sequence ID" value="AAC62110.1"/>
    <property type="molecule type" value="mRNA"/>
</dbReference>
<dbReference type="EMBL" id="AF109772">
    <property type="protein sequence ID" value="AAD38350.1"/>
    <property type="molecule type" value="mRNA"/>
</dbReference>
<dbReference type="EMBL" id="AF109773">
    <property type="protein sequence ID" value="AAD38351.1"/>
    <property type="status" value="ALT_INIT"/>
    <property type="molecule type" value="mRNA"/>
</dbReference>
<dbReference type="EMBL" id="AF109774">
    <property type="protein sequence ID" value="AAD38352.1"/>
    <property type="molecule type" value="mRNA"/>
</dbReference>
<dbReference type="EMBL" id="DQ377223">
    <property type="protein sequence ID" value="ABD24062.1"/>
    <property type="molecule type" value="mRNA"/>
</dbReference>
<dbReference type="RefSeq" id="NP_001416611.1">
    <molecule id="Q9R237-1"/>
    <property type="nucleotide sequence ID" value="NM_001429682.1"/>
</dbReference>
<dbReference type="RefSeq" id="NP_446229.1">
    <molecule id="Q9R237-2"/>
    <property type="nucleotide sequence ID" value="NM_053777.2"/>
</dbReference>
<dbReference type="PDB" id="2FPD">
    <property type="method" value="X-ray"/>
    <property type="resolution" value="2.05 A"/>
    <property type="chains" value="A/B/C/D=487-546"/>
</dbReference>
<dbReference type="PDB" id="2FPE">
    <property type="method" value="X-ray"/>
    <property type="resolution" value="1.75 A"/>
    <property type="chains" value="A/B/C/D/E/F/G/H=487-546"/>
</dbReference>
<dbReference type="PDB" id="2FPF">
    <property type="method" value="X-ray"/>
    <property type="resolution" value="3.00 A"/>
    <property type="chains" value="A/B/C/D=482-552"/>
</dbReference>
<dbReference type="PDBsum" id="2FPD"/>
<dbReference type="PDBsum" id="2FPE"/>
<dbReference type="PDBsum" id="2FPF"/>
<dbReference type="SMR" id="Q9R237"/>
<dbReference type="BioGRID" id="250437">
    <property type="interactions" value="2"/>
</dbReference>
<dbReference type="FunCoup" id="Q9R237">
    <property type="interactions" value="1487"/>
</dbReference>
<dbReference type="IntAct" id="Q9R237">
    <property type="interactions" value="6"/>
</dbReference>
<dbReference type="MINT" id="Q9R237"/>
<dbReference type="STRING" id="10116.ENSRNOP00000074684"/>
<dbReference type="GlyGen" id="Q9R237">
    <property type="glycosylation" value="1 site"/>
</dbReference>
<dbReference type="iPTMnet" id="Q9R237"/>
<dbReference type="PhosphoSitePlus" id="Q9R237"/>
<dbReference type="jPOST" id="Q9R237"/>
<dbReference type="PaxDb" id="10116-ENSRNOP00000065176"/>
<dbReference type="Ensembl" id="ENSRNOT00000079746.2">
    <molecule id="Q9R237-2"/>
    <property type="protein sequence ID" value="ENSRNOP00000074684.1"/>
    <property type="gene ID" value="ENSRNOG00000058478.2"/>
</dbReference>
<dbReference type="Ensembl" id="ENSRNOT00000117436.1">
    <molecule id="Q9R237-1"/>
    <property type="protein sequence ID" value="ENSRNOP00000090670.1"/>
    <property type="gene ID" value="ENSRNOG00000058478.2"/>
</dbReference>
<dbReference type="GeneID" id="116457"/>
<dbReference type="KEGG" id="rno:116457"/>
<dbReference type="UCSC" id="RGD:70937">
    <molecule id="Q9R237-1"/>
    <property type="organism name" value="rat"/>
</dbReference>
<dbReference type="AGR" id="RGD:70937"/>
<dbReference type="CTD" id="9479"/>
<dbReference type="RGD" id="70937">
    <property type="gene designation" value="Mapk8ip1"/>
</dbReference>
<dbReference type="eggNOG" id="KOG3775">
    <property type="taxonomic scope" value="Eukaryota"/>
</dbReference>
<dbReference type="GeneTree" id="ENSGT00940000157089"/>
<dbReference type="InParanoid" id="Q9R237"/>
<dbReference type="PhylomeDB" id="Q9R237"/>
<dbReference type="TreeFam" id="TF325073"/>
<dbReference type="EvolutionaryTrace" id="Q9R237"/>
<dbReference type="PRO" id="PR:Q9R237"/>
<dbReference type="Proteomes" id="UP000002494">
    <property type="component" value="Chromosome 3"/>
</dbReference>
<dbReference type="Bgee" id="ENSRNOG00000058478">
    <property type="expression patterns" value="Expressed in frontal cortex and 19 other cell types or tissues"/>
</dbReference>
<dbReference type="GO" id="GO:0030424">
    <property type="term" value="C:axon"/>
    <property type="evidence" value="ECO:0000266"/>
    <property type="project" value="RGD"/>
</dbReference>
<dbReference type="GO" id="GO:0044295">
    <property type="term" value="C:axonal growth cone"/>
    <property type="evidence" value="ECO:0000314"/>
    <property type="project" value="MGI"/>
</dbReference>
<dbReference type="GO" id="GO:0005737">
    <property type="term" value="C:cytoplasm"/>
    <property type="evidence" value="ECO:0000314"/>
    <property type="project" value="UniProtKB"/>
</dbReference>
<dbReference type="GO" id="GO:0005829">
    <property type="term" value="C:cytosol"/>
    <property type="evidence" value="ECO:0000266"/>
    <property type="project" value="RGD"/>
</dbReference>
<dbReference type="GO" id="GO:0030425">
    <property type="term" value="C:dendrite"/>
    <property type="evidence" value="ECO:0000266"/>
    <property type="project" value="RGD"/>
</dbReference>
<dbReference type="GO" id="GO:0044294">
    <property type="term" value="C:dendritic growth cone"/>
    <property type="evidence" value="ECO:0000314"/>
    <property type="project" value="MGI"/>
</dbReference>
<dbReference type="GO" id="GO:0044302">
    <property type="term" value="C:dentate gyrus mossy fiber"/>
    <property type="evidence" value="ECO:0000266"/>
    <property type="project" value="RGD"/>
</dbReference>
<dbReference type="GO" id="GO:0005789">
    <property type="term" value="C:endoplasmic reticulum membrane"/>
    <property type="evidence" value="ECO:0007669"/>
    <property type="project" value="UniProtKB-SubCell"/>
</dbReference>
<dbReference type="GO" id="GO:0016020">
    <property type="term" value="C:membrane"/>
    <property type="evidence" value="ECO:0000266"/>
    <property type="project" value="RGD"/>
</dbReference>
<dbReference type="GO" id="GO:0031966">
    <property type="term" value="C:mitochondrial membrane"/>
    <property type="evidence" value="ECO:0007669"/>
    <property type="project" value="UniProtKB-SubCell"/>
</dbReference>
<dbReference type="GO" id="GO:0043005">
    <property type="term" value="C:neuron projection"/>
    <property type="evidence" value="ECO:0000266"/>
    <property type="project" value="RGD"/>
</dbReference>
<dbReference type="GO" id="GO:0043025">
    <property type="term" value="C:neuronal cell body"/>
    <property type="evidence" value="ECO:0000266"/>
    <property type="project" value="RGD"/>
</dbReference>
<dbReference type="GO" id="GO:0005634">
    <property type="term" value="C:nucleus"/>
    <property type="evidence" value="ECO:0007669"/>
    <property type="project" value="UniProtKB-SubCell"/>
</dbReference>
<dbReference type="GO" id="GO:0048471">
    <property type="term" value="C:perinuclear region of cytoplasm"/>
    <property type="evidence" value="ECO:0000314"/>
    <property type="project" value="RGD"/>
</dbReference>
<dbReference type="GO" id="GO:0005886">
    <property type="term" value="C:plasma membrane"/>
    <property type="evidence" value="ECO:0007669"/>
    <property type="project" value="Ensembl"/>
</dbReference>
<dbReference type="GO" id="GO:0045202">
    <property type="term" value="C:synapse"/>
    <property type="evidence" value="ECO:0000266"/>
    <property type="project" value="RGD"/>
</dbReference>
<dbReference type="GO" id="GO:0042802">
    <property type="term" value="F:identical protein binding"/>
    <property type="evidence" value="ECO:0000353"/>
    <property type="project" value="IntAct"/>
</dbReference>
<dbReference type="GO" id="GO:0008432">
    <property type="term" value="F:JUN kinase binding"/>
    <property type="evidence" value="ECO:0000353"/>
    <property type="project" value="RGD"/>
</dbReference>
<dbReference type="GO" id="GO:0019894">
    <property type="term" value="F:kinesin binding"/>
    <property type="evidence" value="ECO:0000250"/>
    <property type="project" value="UniProtKB"/>
</dbReference>
<dbReference type="GO" id="GO:0005078">
    <property type="term" value="F:MAP-kinase scaffold activity"/>
    <property type="evidence" value="ECO:0000315"/>
    <property type="project" value="RGD"/>
</dbReference>
<dbReference type="GO" id="GO:0031434">
    <property type="term" value="F:mitogen-activated protein kinase kinase binding"/>
    <property type="evidence" value="ECO:0000353"/>
    <property type="project" value="RGD"/>
</dbReference>
<dbReference type="GO" id="GO:0031435">
    <property type="term" value="F:mitogen-activated protein kinase kinase kinase binding"/>
    <property type="evidence" value="ECO:0000353"/>
    <property type="project" value="RGD"/>
</dbReference>
<dbReference type="GO" id="GO:0019901">
    <property type="term" value="F:protein kinase binding"/>
    <property type="evidence" value="ECO:0000250"/>
    <property type="project" value="UniProtKB"/>
</dbReference>
<dbReference type="GO" id="GO:0007254">
    <property type="term" value="P:JNK cascade"/>
    <property type="evidence" value="ECO:0000318"/>
    <property type="project" value="GO_Central"/>
</dbReference>
<dbReference type="GO" id="GO:0043066">
    <property type="term" value="P:negative regulation of apoptotic process"/>
    <property type="evidence" value="ECO:0000314"/>
    <property type="project" value="RGD"/>
</dbReference>
<dbReference type="GO" id="GO:2001243">
    <property type="term" value="P:negative regulation of intrinsic apoptotic signaling pathway"/>
    <property type="evidence" value="ECO:0000266"/>
    <property type="project" value="RGD"/>
</dbReference>
<dbReference type="GO" id="GO:0046329">
    <property type="term" value="P:negative regulation of JNK cascade"/>
    <property type="evidence" value="ECO:0000315"/>
    <property type="project" value="RGD"/>
</dbReference>
<dbReference type="GO" id="GO:0043508">
    <property type="term" value="P:negative regulation of JUN kinase activity"/>
    <property type="evidence" value="ECO:0000315"/>
    <property type="project" value="UniProtKB"/>
</dbReference>
<dbReference type="GO" id="GO:0046330">
    <property type="term" value="P:positive regulation of JNK cascade"/>
    <property type="evidence" value="ECO:0000250"/>
    <property type="project" value="UniProtKB"/>
</dbReference>
<dbReference type="GO" id="GO:2000564">
    <property type="term" value="P:regulation of CD8-positive, alpha-beta T cell proliferation"/>
    <property type="evidence" value="ECO:0000250"/>
    <property type="project" value="UniProtKB"/>
</dbReference>
<dbReference type="GO" id="GO:0006355">
    <property type="term" value="P:regulation of DNA-templated transcription"/>
    <property type="evidence" value="ECO:0000266"/>
    <property type="project" value="RGD"/>
</dbReference>
<dbReference type="GO" id="GO:0046328">
    <property type="term" value="P:regulation of JNK cascade"/>
    <property type="evidence" value="ECO:0000250"/>
    <property type="project" value="UniProtKB"/>
</dbReference>
<dbReference type="GO" id="GO:0007165">
    <property type="term" value="P:signal transduction"/>
    <property type="evidence" value="ECO:0000266"/>
    <property type="project" value="RGD"/>
</dbReference>
<dbReference type="GO" id="GO:0016192">
    <property type="term" value="P:vesicle-mediated transport"/>
    <property type="evidence" value="ECO:0000266"/>
    <property type="project" value="RGD"/>
</dbReference>
<dbReference type="CDD" id="cd01212">
    <property type="entry name" value="PTB_JIP"/>
    <property type="match status" value="1"/>
</dbReference>
<dbReference type="CDD" id="cd11943">
    <property type="entry name" value="SH3_JIP1"/>
    <property type="match status" value="1"/>
</dbReference>
<dbReference type="FunFam" id="2.30.29.30:FF:000108">
    <property type="entry name" value="C-Jun-amino-terminal kinase-interacting protein 1 isoform X2"/>
    <property type="match status" value="1"/>
</dbReference>
<dbReference type="FunFam" id="2.30.30.40:FF:000032">
    <property type="entry name" value="Putative C-Jun-amino-terminal kinase-interacting protein 2"/>
    <property type="match status" value="1"/>
</dbReference>
<dbReference type="Gene3D" id="2.30.29.30">
    <property type="entry name" value="Pleckstrin-homology domain (PH domain)/Phosphotyrosine-binding domain (PTB)"/>
    <property type="match status" value="1"/>
</dbReference>
<dbReference type="Gene3D" id="2.30.30.40">
    <property type="entry name" value="SH3 Domains"/>
    <property type="match status" value="1"/>
</dbReference>
<dbReference type="InterPro" id="IPR047178">
    <property type="entry name" value="JIP1_scaffold"/>
</dbReference>
<dbReference type="InterPro" id="IPR035638">
    <property type="entry name" value="JIP1_SH3"/>
</dbReference>
<dbReference type="InterPro" id="IPR011993">
    <property type="entry name" value="PH-like_dom_sf"/>
</dbReference>
<dbReference type="InterPro" id="IPR006020">
    <property type="entry name" value="PTB/PI_dom"/>
</dbReference>
<dbReference type="InterPro" id="IPR036028">
    <property type="entry name" value="SH3-like_dom_sf"/>
</dbReference>
<dbReference type="InterPro" id="IPR001452">
    <property type="entry name" value="SH3_domain"/>
</dbReference>
<dbReference type="PANTHER" id="PTHR47437:SF3">
    <property type="entry name" value="C-JUN-AMINO-TERMINAL KINASE-INTERACTING PROTEIN 1"/>
    <property type="match status" value="1"/>
</dbReference>
<dbReference type="PANTHER" id="PTHR47437">
    <property type="entry name" value="JNK-INTERACTING PROTEIN 1-LIKE PROTEIN"/>
    <property type="match status" value="1"/>
</dbReference>
<dbReference type="Pfam" id="PF00640">
    <property type="entry name" value="PID"/>
    <property type="match status" value="1"/>
</dbReference>
<dbReference type="Pfam" id="PF14604">
    <property type="entry name" value="SH3_9"/>
    <property type="match status" value="1"/>
</dbReference>
<dbReference type="SMART" id="SM00462">
    <property type="entry name" value="PTB"/>
    <property type="match status" value="1"/>
</dbReference>
<dbReference type="SMART" id="SM00326">
    <property type="entry name" value="SH3"/>
    <property type="match status" value="1"/>
</dbReference>
<dbReference type="SUPFAM" id="SSF50729">
    <property type="entry name" value="PH domain-like"/>
    <property type="match status" value="1"/>
</dbReference>
<dbReference type="SUPFAM" id="SSF50044">
    <property type="entry name" value="SH3-domain"/>
    <property type="match status" value="1"/>
</dbReference>
<dbReference type="PROSITE" id="PS01179">
    <property type="entry name" value="PID"/>
    <property type="match status" value="1"/>
</dbReference>
<dbReference type="PROSITE" id="PS50002">
    <property type="entry name" value="SH3"/>
    <property type="match status" value="1"/>
</dbReference>
<gene>
    <name type="primary">Mapk8ip1</name>
    <name type="synonym">Ib1</name>
    <name type="synonym">Jip1</name>
    <name type="synonym">Mapk8ip</name>
</gene>
<reference key="1">
    <citation type="journal article" date="1998" name="J. Biol. Chem.">
        <title>IB1, a JIP-1-related nuclear protein present in insulin-secreting cells.</title>
        <authorList>
            <person name="Bonny C."/>
            <person name="Nicod P."/>
            <person name="Waeber G."/>
        </authorList>
    </citation>
    <scope>NUCLEOTIDE SEQUENCE [MRNA] (ISOFORM 1)</scope>
    <source>
        <tissue>Pancreas</tissue>
    </source>
</reference>
<reference key="2">
    <citation type="submission" date="1998-09" db="EMBL/GenBank/DDBJ databases">
        <title>JIP-1 related protein (JRP).</title>
        <authorList>
            <person name="Chen Y."/>
            <person name="Talmage D."/>
        </authorList>
    </citation>
    <scope>NUCLEOTIDE SEQUENCE [MRNA] (ISOFORM 3)</scope>
    <source>
        <strain>Fischer</strain>
        <tissue>Fibroblast</tissue>
    </source>
</reference>
<reference key="3">
    <citation type="journal article" date="1999" name="J. Neurochem.">
        <title>Molecular cloning of multiple splicing variants of JIP-1 preferentially expressed in brain.</title>
        <authorList>
            <person name="Kim I.-J."/>
            <person name="Lee K.-W."/>
            <person name="Park B.Y."/>
            <person name="Lee J.-K."/>
            <person name="Park J."/>
            <person name="Choi I.Y."/>
            <person name="Eom S.-J."/>
            <person name="Chang T.-S."/>
            <person name="Kim M.J."/>
            <person name="Yeom Y.I."/>
            <person name="Chang S.K."/>
            <person name="Lee Y.-D."/>
            <person name="Choi E.-J."/>
            <person name="Han P.-L."/>
        </authorList>
    </citation>
    <scope>NUCLEOTIDE SEQUENCE [MRNA] (ISOFORMS 1 AND 2)</scope>
    <source>
        <strain>Sprague-Dawley</strain>
        <tissue>Brain</tissue>
    </source>
</reference>
<reference key="4">
    <citation type="journal article" date="2010" name="Can. J. Physiol. Pharmacol.">
        <title>Regulation of stress-associated scaffold proteins JIP1 and JIP3 on the c-Jun NH2-terminal kinase in ischemia-reperfusion.</title>
        <authorList>
            <person name="Xu B."/>
            <person name="Zhou Y."/>
            <person name="Karmin O."/>
            <person name="Choy P.C."/>
            <person name="Pierce G.N."/>
            <person name="Siow Y.L."/>
        </authorList>
    </citation>
    <scope>NUCLEOTIDE SEQUENCE [MRNA] (ISOFORM 1)</scope>
    <scope>FUNCTION</scope>
    <scope>INTERACTION WITH MAPK10</scope>
    <source>
        <strain>Sprague-Dawley</strain>
        <tissue>Heart</tissue>
    </source>
</reference>
<reference key="5">
    <citation type="journal article" date="2012" name="J. Biol. Chem.">
        <title>Sh3rf2/POSHER protein promotes cell survival by RING-mediated proteasomal degradation of the c-Jun N-terminal kinase scaffold POSH (Plenty of SH3s) protein.</title>
        <authorList>
            <person name="Wilhelm M."/>
            <person name="Kukekov N.V."/>
            <person name="Schmit T.L."/>
            <person name="Biagas K.V."/>
            <person name="Sproul A.A."/>
            <person name="Gire S."/>
            <person name="Maes M.E."/>
            <person name="Xu Z."/>
            <person name="Greene L.A."/>
        </authorList>
    </citation>
    <scope>INTERACTION WITH SH3RF2</scope>
</reference>
<reference key="6">
    <citation type="journal article" date="2012" name="Nat. Commun.">
        <title>Quantitative maps of protein phosphorylation sites across 14 different rat organs and tissues.</title>
        <authorList>
            <person name="Lundby A."/>
            <person name="Secher A."/>
            <person name="Lage K."/>
            <person name="Nordsborg N.B."/>
            <person name="Dmytriyev A."/>
            <person name="Lundby C."/>
            <person name="Olsen J.V."/>
        </authorList>
    </citation>
    <scope>PHOSPHORYLATION [LARGE SCALE ANALYSIS] AT SER-14 AND SER-28</scope>
    <scope>IDENTIFICATION BY MASS SPECTROMETRY [LARGE SCALE ANALYSIS]</scope>
</reference>
<reference key="7">
    <citation type="journal article" date="2006" name="EMBO J.">
        <title>A unique set of SH3-SH3 interactions controls IB1 homodimerization.</title>
        <authorList>
            <person name="Kristensen O."/>
            <person name="Guenat S."/>
            <person name="Dar I."/>
            <person name="Allaman-Pillet N."/>
            <person name="Abderrahmani A."/>
            <person name="Ferdaoussi M."/>
            <person name="Roduit R."/>
            <person name="Maurer F."/>
            <person name="Beckmann J.S."/>
            <person name="Kastrup J.S."/>
            <person name="Gajhede M."/>
            <person name="Bonny C."/>
        </authorList>
    </citation>
    <scope>X-RAY CRYSTALLOGRAPHY (1.75 ANGSTROMS) OF 487-546</scope>
    <scope>SH3 DOMAIN</scope>
    <scope>SUBUNIT</scope>
</reference>
<feature type="chain" id="PRO_0000220630" description="C-Jun-amino-terminal kinase-interacting protein 1">
    <location>
        <begin position="1"/>
        <end position="708"/>
    </location>
</feature>
<feature type="domain" description="SH3" evidence="5">
    <location>
        <begin position="485"/>
        <end position="546"/>
    </location>
</feature>
<feature type="domain" description="PID" evidence="4">
    <location>
        <begin position="558"/>
        <end position="697"/>
    </location>
</feature>
<feature type="region of interest" description="Disordered" evidence="6">
    <location>
        <begin position="1"/>
        <end position="26"/>
    </location>
</feature>
<feature type="region of interest" description="Disordered" evidence="6">
    <location>
        <begin position="69"/>
        <end position="368"/>
    </location>
</feature>
<feature type="region of interest" description="JNK-binding domain (JBD)">
    <location>
        <begin position="126"/>
        <end position="282"/>
    </location>
</feature>
<feature type="region of interest" description="Minimal inhibitory domain (MID)">
    <location>
        <begin position="154"/>
        <end position="173"/>
    </location>
</feature>
<feature type="region of interest" description="Interaction with MAP3K7" evidence="1">
    <location>
        <begin position="280"/>
        <end position="468"/>
    </location>
</feature>
<feature type="region of interest" description="Disordered" evidence="6">
    <location>
        <begin position="426"/>
        <end position="448"/>
    </location>
</feature>
<feature type="region of interest" description="Interaction with VRK2" evidence="1">
    <location>
        <begin position="468"/>
        <end position="657"/>
    </location>
</feature>
<feature type="short sequence motif" description="D-box 1">
    <location>
        <begin position="350"/>
        <end position="357"/>
    </location>
</feature>
<feature type="short sequence motif" description="D-box 2">
    <location>
        <begin position="361"/>
        <end position="369"/>
    </location>
</feature>
<feature type="compositionally biased region" description="Low complexity" evidence="6">
    <location>
        <begin position="11"/>
        <end position="24"/>
    </location>
</feature>
<feature type="compositionally biased region" description="Low complexity" evidence="6">
    <location>
        <begin position="71"/>
        <end position="87"/>
    </location>
</feature>
<feature type="compositionally biased region" description="Acidic residues" evidence="6">
    <location>
        <begin position="105"/>
        <end position="116"/>
    </location>
</feature>
<feature type="compositionally biased region" description="Polar residues" evidence="6">
    <location>
        <begin position="159"/>
        <end position="179"/>
    </location>
</feature>
<feature type="compositionally biased region" description="Polar residues" evidence="6">
    <location>
        <begin position="191"/>
        <end position="201"/>
    </location>
</feature>
<feature type="compositionally biased region" description="Polar residues" evidence="6">
    <location>
        <begin position="220"/>
        <end position="232"/>
    </location>
</feature>
<feature type="compositionally biased region" description="Basic and acidic residues" evidence="6">
    <location>
        <begin position="264"/>
        <end position="274"/>
    </location>
</feature>
<feature type="compositionally biased region" description="Polar residues" evidence="6">
    <location>
        <begin position="292"/>
        <end position="308"/>
    </location>
</feature>
<feature type="modified residue" description="Phosphoserine" evidence="13">
    <location>
        <position position="14"/>
    </location>
</feature>
<feature type="modified residue" description="Phosphoserine" evidence="13">
    <location>
        <position position="28"/>
    </location>
</feature>
<feature type="modified residue" description="Phosphoserine" evidence="2">
    <location>
        <position position="39"/>
    </location>
</feature>
<feature type="modified residue" description="Phosphothreonine; by MAPK8, MAPK9 and MAPK10" evidence="2">
    <location>
        <position position="103"/>
    </location>
</feature>
<feature type="modified residue" description="Phosphoserine" evidence="2">
    <location>
        <position position="149"/>
    </location>
</feature>
<feature type="modified residue" description="Phosphoserine" evidence="2">
    <location>
        <position position="178"/>
    </location>
</feature>
<feature type="modified residue" description="Phosphoserine" evidence="2">
    <location>
        <position position="184"/>
    </location>
</feature>
<feature type="modified residue" description="Phosphoserine" evidence="2">
    <location>
        <position position="190"/>
    </location>
</feature>
<feature type="modified residue" description="Phosphoserine" evidence="2">
    <location>
        <position position="192"/>
    </location>
</feature>
<feature type="modified residue" description="Phosphoserine" evidence="2">
    <location>
        <position position="193"/>
    </location>
</feature>
<feature type="modified residue" description="Phosphothreonine; by MAPK8, MAPK9 and MAPK10" evidence="2">
    <location>
        <position position="202"/>
    </location>
</feature>
<feature type="modified residue" description="Phosphoserine" evidence="2">
    <location>
        <position position="211"/>
    </location>
</feature>
<feature type="modified residue" description="Phosphoserine" evidence="2">
    <location>
        <position position="308"/>
    </location>
</feature>
<feature type="modified residue" description="Phosphoserine" evidence="2">
    <location>
        <position position="325"/>
    </location>
</feature>
<feature type="modified residue" description="Phosphoserine" evidence="2">
    <location>
        <position position="327"/>
    </location>
</feature>
<feature type="modified residue" description="Phosphoserine" evidence="2">
    <location>
        <position position="337"/>
    </location>
</feature>
<feature type="modified residue" description="Phosphoserine" evidence="2">
    <location>
        <position position="352"/>
    </location>
</feature>
<feature type="modified residue" description="Phosphoserine" evidence="2">
    <location>
        <position position="363"/>
    </location>
</feature>
<feature type="modified residue" description="Phosphoserine" evidence="2">
    <location>
        <position position="366"/>
    </location>
</feature>
<feature type="modified residue" description="Phosphoserine" evidence="2">
    <location>
        <position position="404"/>
    </location>
</feature>
<feature type="modified residue" description="Phosphoserine" evidence="2">
    <location>
        <position position="406"/>
    </location>
</feature>
<feature type="modified residue" description="Phosphothreonine" evidence="2">
    <location>
        <position position="408"/>
    </location>
</feature>
<feature type="modified residue" description="Phosphoserine" evidence="2">
    <location>
        <position position="441"/>
    </location>
</feature>
<feature type="modified residue" description="Phosphoserine" evidence="2">
    <location>
        <position position="444"/>
    </location>
</feature>
<feature type="modified residue" description="Phosphothreonine" evidence="2">
    <location>
        <position position="445"/>
    </location>
</feature>
<feature type="modified residue" description="Phosphoserine" evidence="2">
    <location>
        <position position="466"/>
    </location>
</feature>
<feature type="modified residue" description="Phosphoserine" evidence="2">
    <location>
        <position position="468"/>
    </location>
</feature>
<feature type="modified residue" description="Phosphoserine" evidence="2">
    <location>
        <position position="469"/>
    </location>
</feature>
<feature type="modified residue" description="Phosphoserine" evidence="2">
    <location>
        <position position="470"/>
    </location>
</feature>
<feature type="splice variant" id="VSP_002767" description="In isoform 2." evidence="10">
    <original>MAERESGLSGGAASPPAASPFLGLHIASPPNFR</original>
    <variation>MQLVLKMDSSPDNDSWLEDQWERW</variation>
    <location>
        <begin position="1"/>
        <end position="33"/>
    </location>
</feature>
<feature type="splice variant" id="VSP_002768" description="In isoform 3." evidence="11">
    <location>
        <begin position="69"/>
        <end position="93"/>
    </location>
</feature>
<feature type="splice variant" id="VSP_002769" description="In isoform 3." evidence="11">
    <original>E</original>
    <variation>EPMAQVQLQVDLEIKRAAAEQKLISEEDLNGAA</variation>
    <location>
        <position position="708"/>
    </location>
</feature>
<feature type="sequence conflict" description="In Ref. 2; AAC62110." evidence="12" ref="2">
    <original>I</original>
    <variation>V</variation>
    <location>
        <position position="38"/>
    </location>
</feature>
<feature type="sequence conflict" description="In Ref. 1; AAD22543." evidence="12" ref="1">
    <original>S</original>
    <variation>C</variation>
    <location>
        <position position="149"/>
    </location>
</feature>
<feature type="sequence conflict" description="In Ref. 4; ABD24062." evidence="12" ref="4">
    <original>E</original>
    <variation>D</variation>
    <location>
        <position position="384"/>
    </location>
</feature>
<feature type="strand" evidence="14">
    <location>
        <begin position="490"/>
        <end position="492"/>
    </location>
</feature>
<feature type="strand" evidence="14">
    <location>
        <begin position="511"/>
        <end position="517"/>
    </location>
</feature>
<feature type="strand" evidence="14">
    <location>
        <begin position="521"/>
        <end position="527"/>
    </location>
</feature>
<feature type="turn" evidence="14">
    <location>
        <begin position="528"/>
        <end position="530"/>
    </location>
</feature>
<feature type="strand" evidence="14">
    <location>
        <begin position="533"/>
        <end position="537"/>
    </location>
</feature>
<feature type="helix" evidence="14">
    <location>
        <begin position="538"/>
        <end position="540"/>
    </location>
</feature>
<feature type="strand" evidence="14">
    <location>
        <begin position="541"/>
        <end position="543"/>
    </location>
</feature>
<organism>
    <name type="scientific">Rattus norvegicus</name>
    <name type="common">Rat</name>
    <dbReference type="NCBI Taxonomy" id="10116"/>
    <lineage>
        <taxon>Eukaryota</taxon>
        <taxon>Metazoa</taxon>
        <taxon>Chordata</taxon>
        <taxon>Craniata</taxon>
        <taxon>Vertebrata</taxon>
        <taxon>Euteleostomi</taxon>
        <taxon>Mammalia</taxon>
        <taxon>Eutheria</taxon>
        <taxon>Euarchontoglires</taxon>
        <taxon>Glires</taxon>
        <taxon>Rodentia</taxon>
        <taxon>Myomorpha</taxon>
        <taxon>Muroidea</taxon>
        <taxon>Muridae</taxon>
        <taxon>Murinae</taxon>
        <taxon>Rattus</taxon>
    </lineage>
</organism>
<accession>Q9R237</accession>
<accession>B0VXR5</accession>
<accession>O88979</accession>
<accession>Q9R1H8</accession>
<accession>Q9WVI5</accession>
<accession>Q9WVI6</accession>
<evidence type="ECO:0000250" key="1"/>
<evidence type="ECO:0000250" key="2">
    <source>
        <dbReference type="UniProtKB" id="Q9UQF2"/>
    </source>
</evidence>
<evidence type="ECO:0000250" key="3">
    <source>
        <dbReference type="UniProtKB" id="Q9WVI9"/>
    </source>
</evidence>
<evidence type="ECO:0000255" key="4">
    <source>
        <dbReference type="PROSITE-ProRule" id="PRU00148"/>
    </source>
</evidence>
<evidence type="ECO:0000255" key="5">
    <source>
        <dbReference type="PROSITE-ProRule" id="PRU00192"/>
    </source>
</evidence>
<evidence type="ECO:0000256" key="6">
    <source>
        <dbReference type="SAM" id="MobiDB-lite"/>
    </source>
</evidence>
<evidence type="ECO:0000269" key="7">
    <source>
    </source>
</evidence>
<evidence type="ECO:0000269" key="8">
    <source>
    </source>
</evidence>
<evidence type="ECO:0000269" key="9">
    <source>
    </source>
</evidence>
<evidence type="ECO:0000303" key="10">
    <source>
    </source>
</evidence>
<evidence type="ECO:0000303" key="11">
    <source ref="2"/>
</evidence>
<evidence type="ECO:0000305" key="12"/>
<evidence type="ECO:0007744" key="13">
    <source>
    </source>
</evidence>
<evidence type="ECO:0007829" key="14">
    <source>
        <dbReference type="PDB" id="2FPE"/>
    </source>
</evidence>
<name>JIP1_RAT</name>
<keyword id="KW-0002">3D-structure</keyword>
<keyword id="KW-0025">Alternative splicing</keyword>
<keyword id="KW-0963">Cytoplasm</keyword>
<keyword id="KW-0256">Endoplasmic reticulum</keyword>
<keyword id="KW-0472">Membrane</keyword>
<keyword id="KW-0496">Mitochondrion</keyword>
<keyword id="KW-0539">Nucleus</keyword>
<keyword id="KW-0597">Phosphoprotein</keyword>
<keyword id="KW-1185">Reference proteome</keyword>
<keyword id="KW-0677">Repeat</keyword>
<keyword id="KW-0728">SH3 domain</keyword>
<keyword id="KW-0832">Ubl conjugation</keyword>
<comment type="function">
    <text evidence="3 8">The JNK-interacting protein (JIP) group of scaffold proteins selectively mediates JNK signaling by aggregating specific components of the MAPK cascade to form a functional JNK signaling module. Required for JNK activation in response to excitotoxic stress. Cytoplasmic MAPK8IP1 causes inhibition of JNK-regulated activity by retaining JNK in the cytoplasm and thus inhibiting the JNK phosphorylation of c-Jun. May also participate in ApoER2-specific reelin signaling. Directly, or indirectly, regulates GLUT2 gene expression and beta-cell function. Appears to have a role in cell signaling in mature and developing nerve terminals. May function as a regulator of vesicle transport, through interactions with the JNK-signaling components and motor proteins. Functions as an anti-apoptotic protein and whose level seems to influence the beta-cell death or survival response. Acts as a scaffold protein that coordinates with SH3RF1 in organizing different components of the JNK pathway, including RAC1 or RAC2, MAP3K11/MLK3 or MAP3K7/TAK1, MAP2K7/MKK7, MAPK8/JNK1 and/or MAPK9/JNK2 into a functional multiprotein complex to ensure the effective activation of the JNK signaling pathway. Regulates the activation of MAPK8/JNK1 and differentiation of CD8(+) T-cells.</text>
</comment>
<comment type="subunit">
    <text evidence="2 3 7 8 9">Forms homo- or heterooligomeric complexes (PubMed:16456539). Binds specific components of the JNK signaling pathway namely MAPK8/JNK1, MAPK9/JNK2, MAPK10/JNK3, MAP2K7/MKK7, MAP3K11/MLK3 and DLK1. Also binds the proline-rich domain-containing splice variant of apolipoprotein E receptor 2 (ApoER2). Interacts, via the PID domain, with ARHGEF28 (By similarity). Binds the cytoplasmic tails of LRP1 and LRP2 (Megalin). Binds the TPR motif-containing C-terminal of kinesin light chain, KLC1. Pre-assembled MAPK8IP1 scaffolding complexes are then transported as a cargo of kinesin, to the required subcellular location. Interacts with the cytoplasmic domain of APP (By similarity). Interacts with DCLK2, VRK2 and MAP3K7/TAK1. Found in a complex with SH3RF1, RAC1, MAP3K11/MLK3, MAP2K7/MKK7 and MAPK8/JNK1. Found in a complex with SH3RF1, RAC2, MAP3K7/TAK1, MAP2K7/MKK7, MAPK8/JNK1 and MAPK9/JNK2 (By similarity). Interacts with SH3RF2 (PubMed:22128169).</text>
</comment>
<comment type="interaction">
    <interactant intactId="EBI-8051913">
        <id>Q9R237-3</id>
    </interactant>
    <interactant intactId="EBI-8051913">
        <id>Q9R237-3</id>
        <label>Mapk8ip1</label>
    </interactant>
    <organismsDiffer>false</organismsDiffer>
    <experiments>8</experiments>
</comment>
<comment type="subcellular location">
    <subcellularLocation>
        <location evidence="1">Cytoplasm</location>
    </subcellularLocation>
    <subcellularLocation>
        <location evidence="1">Cytoplasm</location>
        <location evidence="1">Perinuclear region</location>
    </subcellularLocation>
    <subcellularLocation>
        <location>Nucleus</location>
    </subcellularLocation>
    <subcellularLocation>
        <location evidence="1">Endoplasmic reticulum membrane</location>
    </subcellularLocation>
    <subcellularLocation>
        <location evidence="1">Mitochondrion membrane</location>
    </subcellularLocation>
    <text>Accumulates in cell surface projections. Under certain stress conditions, translocates to the perinuclear region of neurons. In insulin-secreting cells, detected in both the cytoplasm and nucleus.</text>
</comment>
<comment type="alternative products">
    <event type="alternative splicing"/>
    <isoform>
        <id>Q9R237-1</id>
        <name>1</name>
        <name>JIP-1a</name>
        <name>JIP-1b</name>
        <sequence type="displayed"/>
    </isoform>
    <isoform>
        <id>Q9R237-2</id>
        <name>2</name>
        <name>JIP-1c</name>
        <name>2A</name>
        <sequence type="described" ref="VSP_002767"/>
    </isoform>
    <isoform>
        <id>Q9R237-3</id>
        <name>3</name>
        <name>JIP-1d</name>
        <sequence type="described" ref="VSP_002768 VSP_002769"/>
    </isoform>
</comment>
<comment type="tissue specificity">
    <text>Highly expressed in brain and pancreatic beta-cells. Weaker expression found in kidney.</text>
</comment>
<comment type="domain">
    <text>The SH3 domain mediates homodimerization.</text>
</comment>
<comment type="PTM">
    <text evidence="1">Phosphorylated by MAPK8, MAPK9 and MAPK10. Phosphorylation on Thr-103 is also necessary for the dissociation and activation of MAP3K12. Phosphorylated by VRK2. Hyperphosphorylated during mitosis following activation of stress-activated and MAP kinases (By similarity).</text>
</comment>
<comment type="PTM">
    <text evidence="1">Ubiquitinated. Two preliminary events are required to prime for ubiquitination; phosphorylation and an increased in intracellular calcium concentration. Then, the calcium influx initiates ubiquitination and degradation by the ubiquitin-proteasome pathway (By similarity).</text>
</comment>
<comment type="similarity">
    <text evidence="12">Belongs to the JIP scaffold family.</text>
</comment>
<comment type="sequence caution" evidence="12">
    <conflict type="erroneous initiation">
        <sequence resource="EMBL-CDS" id="AAD22543"/>
    </conflict>
</comment>
<comment type="sequence caution" evidence="12">
    <conflict type="erroneous initiation">
        <sequence resource="EMBL-CDS" id="AAD38351"/>
    </conflict>
</comment>